<accession>C5DRF7</accession>
<evidence type="ECO:0000250" key="1"/>
<evidence type="ECO:0000255" key="2"/>
<evidence type="ECO:0000256" key="3">
    <source>
        <dbReference type="SAM" id="MobiDB-lite"/>
    </source>
</evidence>
<evidence type="ECO:0000305" key="4"/>
<proteinExistence type="inferred from homology"/>
<reference key="1">
    <citation type="journal article" date="2009" name="Genome Res.">
        <title>Comparative genomics of protoploid Saccharomycetaceae.</title>
        <authorList>
            <consortium name="The Genolevures Consortium"/>
            <person name="Souciet J.-L."/>
            <person name="Dujon B."/>
            <person name="Gaillardin C."/>
            <person name="Johnston M."/>
            <person name="Baret P.V."/>
            <person name="Cliften P."/>
            <person name="Sherman D.J."/>
            <person name="Weissenbach J."/>
            <person name="Westhof E."/>
            <person name="Wincker P."/>
            <person name="Jubin C."/>
            <person name="Poulain J."/>
            <person name="Barbe V."/>
            <person name="Segurens B."/>
            <person name="Artiguenave F."/>
            <person name="Anthouard V."/>
            <person name="Vacherie B."/>
            <person name="Val M.-E."/>
            <person name="Fulton R.S."/>
            <person name="Minx P."/>
            <person name="Wilson R."/>
            <person name="Durrens P."/>
            <person name="Jean G."/>
            <person name="Marck C."/>
            <person name="Martin T."/>
            <person name="Nikolski M."/>
            <person name="Rolland T."/>
            <person name="Seret M.-L."/>
            <person name="Casaregola S."/>
            <person name="Despons L."/>
            <person name="Fairhead C."/>
            <person name="Fischer G."/>
            <person name="Lafontaine I."/>
            <person name="Leh V."/>
            <person name="Lemaire M."/>
            <person name="de Montigny J."/>
            <person name="Neuveglise C."/>
            <person name="Thierry A."/>
            <person name="Blanc-Lenfle I."/>
            <person name="Bleykasten C."/>
            <person name="Diffels J."/>
            <person name="Fritsch E."/>
            <person name="Frangeul L."/>
            <person name="Goeffon A."/>
            <person name="Jauniaux N."/>
            <person name="Kachouri-Lafond R."/>
            <person name="Payen C."/>
            <person name="Potier S."/>
            <person name="Pribylova L."/>
            <person name="Ozanne C."/>
            <person name="Richard G.-F."/>
            <person name="Sacerdot C."/>
            <person name="Straub M.-L."/>
            <person name="Talla E."/>
        </authorList>
    </citation>
    <scope>NUCLEOTIDE SEQUENCE [LARGE SCALE GENOMIC DNA]</scope>
    <source>
        <strain>ATCC 2623 / CBS 732 / BCRC 21506 / NBRC 1130 / NCYC 568 / NRRL Y-229</strain>
    </source>
</reference>
<organism>
    <name type="scientific">Zygosaccharomyces rouxii (strain ATCC 2623 / CBS 732 / NBRC 1130 / NCYC 568 / NRRL Y-229)</name>
    <dbReference type="NCBI Taxonomy" id="559307"/>
    <lineage>
        <taxon>Eukaryota</taxon>
        <taxon>Fungi</taxon>
        <taxon>Dikarya</taxon>
        <taxon>Ascomycota</taxon>
        <taxon>Saccharomycotina</taxon>
        <taxon>Saccharomycetes</taxon>
        <taxon>Saccharomycetales</taxon>
        <taxon>Saccharomycetaceae</taxon>
        <taxon>Zygosaccharomyces</taxon>
    </lineage>
</organism>
<name>ATG33_ZYGRC</name>
<sequence length="206" mass="21362">MSVCLGVTKGIAVSSLGIYAGILTTGTICTYMVPVDVITKHLNSVVCRVGEVASALGLLSTGFFSLSYFGAPSHLRHPYLIYSALVAPASALYLWAISRCNHKCHAKSKIAEQGKTNGDNKTQSPPLGDSVVDLGADSKVPSGHPPVKEGAKCPMGNAVVTNEPSSTDYARPAGCQSKFAKHLAVVTGVAIIGFLQSVIGVYGEPA</sequence>
<feature type="chain" id="PRO_0000399773" description="Autophagy-related protein 33">
    <location>
        <begin position="1"/>
        <end position="206"/>
    </location>
</feature>
<feature type="transmembrane region" description="Helical" evidence="2">
    <location>
        <begin position="13"/>
        <end position="35"/>
    </location>
</feature>
<feature type="transmembrane region" description="Helical" evidence="2">
    <location>
        <begin position="52"/>
        <end position="72"/>
    </location>
</feature>
<feature type="transmembrane region" description="Helical" evidence="2">
    <location>
        <begin position="78"/>
        <end position="98"/>
    </location>
</feature>
<feature type="transmembrane region" description="Helical" evidence="2">
    <location>
        <begin position="183"/>
        <end position="203"/>
    </location>
</feature>
<feature type="region of interest" description="Disordered" evidence="3">
    <location>
        <begin position="111"/>
        <end position="130"/>
    </location>
</feature>
<feature type="compositionally biased region" description="Polar residues" evidence="3">
    <location>
        <begin position="114"/>
        <end position="125"/>
    </location>
</feature>
<dbReference type="EMBL" id="CU928174">
    <property type="protein sequence ID" value="CAR26368.1"/>
    <property type="molecule type" value="Genomic_DNA"/>
</dbReference>
<dbReference type="RefSeq" id="XP_002495301.1">
    <property type="nucleotide sequence ID" value="XM_002495256.1"/>
</dbReference>
<dbReference type="FunCoup" id="C5DRF7">
    <property type="interactions" value="142"/>
</dbReference>
<dbReference type="GeneID" id="8202453"/>
<dbReference type="KEGG" id="zro:ZYRO0B08096g"/>
<dbReference type="HOGENOM" id="CLU_105986_1_0_1"/>
<dbReference type="InParanoid" id="C5DRF7"/>
<dbReference type="Proteomes" id="UP000008536">
    <property type="component" value="Chromosome B"/>
</dbReference>
<dbReference type="GO" id="GO:0005741">
    <property type="term" value="C:mitochondrial outer membrane"/>
    <property type="evidence" value="ECO:0007669"/>
    <property type="project" value="TreeGrafter"/>
</dbReference>
<dbReference type="GO" id="GO:0000422">
    <property type="term" value="P:autophagy of mitochondrion"/>
    <property type="evidence" value="ECO:0007669"/>
    <property type="project" value="TreeGrafter"/>
</dbReference>
<dbReference type="GO" id="GO:0016236">
    <property type="term" value="P:macroautophagy"/>
    <property type="evidence" value="ECO:0007669"/>
    <property type="project" value="TreeGrafter"/>
</dbReference>
<dbReference type="InterPro" id="IPR051668">
    <property type="entry name" value="ATG33"/>
</dbReference>
<dbReference type="PANTHER" id="PTHR37278">
    <property type="entry name" value="AUTOPHAGY-RELATED PROTEIN 33-RELATED"/>
    <property type="match status" value="1"/>
</dbReference>
<dbReference type="PANTHER" id="PTHR37278:SF1">
    <property type="entry name" value="AUTOPHAGY-RELATED PROTEIN 33-RELATED"/>
    <property type="match status" value="1"/>
</dbReference>
<comment type="function">
    <text evidence="1">Involved in the selective degradation of mitochondria via autophagy during starvation and at post-log phase.</text>
</comment>
<comment type="subcellular location">
    <subcellularLocation>
        <location evidence="4">Mitochondrion membrane</location>
        <topology evidence="4">Multi-pass membrane protein</topology>
    </subcellularLocation>
</comment>
<comment type="similarity">
    <text evidence="4">Belongs to the ATG33 family.</text>
</comment>
<keyword id="KW-0072">Autophagy</keyword>
<keyword id="KW-0472">Membrane</keyword>
<keyword id="KW-0496">Mitochondrion</keyword>
<keyword id="KW-1185">Reference proteome</keyword>
<keyword id="KW-0812">Transmembrane</keyword>
<keyword id="KW-1133">Transmembrane helix</keyword>
<gene>
    <name type="primary">ATG33</name>
    <name type="ordered locus">ZYRO0B08096g</name>
</gene>
<protein>
    <recommendedName>
        <fullName>Autophagy-related protein 33</fullName>
    </recommendedName>
</protein>